<protein>
    <recommendedName>
        <fullName evidence="1">Agmatine deiminase</fullName>
        <ecNumber evidence="1">3.5.3.12</ecNumber>
    </recommendedName>
    <alternativeName>
        <fullName evidence="1">Agmatine iminohydrolase</fullName>
    </alternativeName>
</protein>
<name>AGUA_PSESM</name>
<comment type="function">
    <text evidence="1">Mediates the hydrolysis of agmatine into N-carbamoylputrescine in the arginine decarboxylase (ADC) pathway of putrescine biosynthesis, a basic polyamine.</text>
</comment>
<comment type="catalytic activity">
    <reaction evidence="1">
        <text>agmatine + H2O = N-carbamoylputrescine + NH4(+)</text>
        <dbReference type="Rhea" id="RHEA:18037"/>
        <dbReference type="ChEBI" id="CHEBI:15377"/>
        <dbReference type="ChEBI" id="CHEBI:28938"/>
        <dbReference type="ChEBI" id="CHEBI:58145"/>
        <dbReference type="ChEBI" id="CHEBI:58318"/>
        <dbReference type="EC" id="3.5.3.12"/>
    </reaction>
</comment>
<comment type="pathway">
    <text evidence="1">Amine and polyamine biosynthesis; putrescine biosynthesis via agmatine pathway; N-carbamoylputrescine from agmatine: step 1/1.</text>
</comment>
<comment type="subunit">
    <text evidence="1">Homodimer.</text>
</comment>
<comment type="similarity">
    <text evidence="1">Belongs to the agmatine deiminase family.</text>
</comment>
<sequence>MTTLNSTPRADGFHMPAEWAPQTQVWMVWPERPDNWRLGGKPAQAAHVAIAKAIARFEPVTVAVSAAQYDNARARLDMPNIRVVEMSSNDAWVRDSGPTFVINDRGELRGVNWEFNAWGGFDGGLYAPWNLDSQVGSKVLEIERCPRYATQGFVLEGGSIHVDGEGTLITTEECLLNRNRNPHLTREQIEAVLSDYLAVDKIIWLPDGLFNDETDGHVDNFCCYIRPGEVLLAWTDDPEDPNYPRCHAALSILENTRDAQGRAFIVHKMPIPGPLFATEEECAGVDQVHGSQERNPSVRLAGSYVNFLIVNGGIIAPSFDDPMDEKAREILQKLFPEHEVVMAPGRELLLGGGNIHCLTQQQPAPFKA</sequence>
<proteinExistence type="inferred from homology"/>
<dbReference type="EC" id="3.5.3.12" evidence="1"/>
<dbReference type="EMBL" id="AE016853">
    <property type="protein sequence ID" value="AAO58815.1"/>
    <property type="molecule type" value="Genomic_DNA"/>
</dbReference>
<dbReference type="RefSeq" id="NP_795120.1">
    <property type="nucleotide sequence ID" value="NC_004578.1"/>
</dbReference>
<dbReference type="RefSeq" id="WP_011105465.1">
    <property type="nucleotide sequence ID" value="NC_004578.1"/>
</dbReference>
<dbReference type="SMR" id="Q87UB2"/>
<dbReference type="STRING" id="223283.PSPTO_5393"/>
<dbReference type="GeneID" id="1187080"/>
<dbReference type="KEGG" id="pst:PSPTO_5393"/>
<dbReference type="PATRIC" id="fig|223283.9.peg.5519"/>
<dbReference type="eggNOG" id="COG2957">
    <property type="taxonomic scope" value="Bacteria"/>
</dbReference>
<dbReference type="HOGENOM" id="CLU_037682_1_0_6"/>
<dbReference type="OrthoDB" id="9808013at2"/>
<dbReference type="PhylomeDB" id="Q87UB2"/>
<dbReference type="UniPathway" id="UPA00534">
    <property type="reaction ID" value="UER00285"/>
</dbReference>
<dbReference type="Proteomes" id="UP000002515">
    <property type="component" value="Chromosome"/>
</dbReference>
<dbReference type="GO" id="GO:0047632">
    <property type="term" value="F:agmatine deiminase activity"/>
    <property type="evidence" value="ECO:0007669"/>
    <property type="project" value="UniProtKB-UniRule"/>
</dbReference>
<dbReference type="GO" id="GO:0004668">
    <property type="term" value="F:protein-arginine deiminase activity"/>
    <property type="evidence" value="ECO:0007669"/>
    <property type="project" value="InterPro"/>
</dbReference>
<dbReference type="GO" id="GO:0033388">
    <property type="term" value="P:putrescine biosynthetic process from arginine"/>
    <property type="evidence" value="ECO:0007669"/>
    <property type="project" value="UniProtKB-UniRule"/>
</dbReference>
<dbReference type="Gene3D" id="3.75.10.10">
    <property type="entry name" value="L-arginine/glycine Amidinotransferase, Chain A"/>
    <property type="match status" value="1"/>
</dbReference>
<dbReference type="HAMAP" id="MF_01841">
    <property type="entry name" value="Agmatine_deimin"/>
    <property type="match status" value="1"/>
</dbReference>
<dbReference type="InterPro" id="IPR017754">
    <property type="entry name" value="Agmatine_deiminase"/>
</dbReference>
<dbReference type="InterPro" id="IPR007466">
    <property type="entry name" value="Peptidyl-Arg-deiminase_porph"/>
</dbReference>
<dbReference type="NCBIfam" id="TIGR03380">
    <property type="entry name" value="agmatine_aguA"/>
    <property type="match status" value="1"/>
</dbReference>
<dbReference type="NCBIfam" id="NF010070">
    <property type="entry name" value="PRK13551.1"/>
    <property type="match status" value="1"/>
</dbReference>
<dbReference type="PANTHER" id="PTHR31377">
    <property type="entry name" value="AGMATINE DEIMINASE-RELATED"/>
    <property type="match status" value="1"/>
</dbReference>
<dbReference type="PANTHER" id="PTHR31377:SF0">
    <property type="entry name" value="AGMATINE DEIMINASE-RELATED"/>
    <property type="match status" value="1"/>
</dbReference>
<dbReference type="Pfam" id="PF04371">
    <property type="entry name" value="PAD_porph"/>
    <property type="match status" value="1"/>
</dbReference>
<dbReference type="SUPFAM" id="SSF55909">
    <property type="entry name" value="Pentein"/>
    <property type="match status" value="1"/>
</dbReference>
<gene>
    <name evidence="1" type="primary">aguA</name>
    <name type="ordered locus">PSPTO_5393</name>
</gene>
<reference key="1">
    <citation type="journal article" date="2003" name="Proc. Natl. Acad. Sci. U.S.A.">
        <title>The complete genome sequence of the Arabidopsis and tomato pathogen Pseudomonas syringae pv. tomato DC3000.</title>
        <authorList>
            <person name="Buell C.R."/>
            <person name="Joardar V."/>
            <person name="Lindeberg M."/>
            <person name="Selengut J."/>
            <person name="Paulsen I.T."/>
            <person name="Gwinn M.L."/>
            <person name="Dodson R.J."/>
            <person name="DeBoy R.T."/>
            <person name="Durkin A.S."/>
            <person name="Kolonay J.F."/>
            <person name="Madupu R."/>
            <person name="Daugherty S.C."/>
            <person name="Brinkac L.M."/>
            <person name="Beanan M.J."/>
            <person name="Haft D.H."/>
            <person name="Nelson W.C."/>
            <person name="Davidsen T.M."/>
            <person name="Zafar N."/>
            <person name="Zhou L."/>
            <person name="Liu J."/>
            <person name="Yuan Q."/>
            <person name="Khouri H.M."/>
            <person name="Fedorova N.B."/>
            <person name="Tran B."/>
            <person name="Russell D."/>
            <person name="Berry K.J."/>
            <person name="Utterback T.R."/>
            <person name="Van Aken S.E."/>
            <person name="Feldblyum T.V."/>
            <person name="D'Ascenzo M."/>
            <person name="Deng W.-L."/>
            <person name="Ramos A.R."/>
            <person name="Alfano J.R."/>
            <person name="Cartinhour S."/>
            <person name="Chatterjee A.K."/>
            <person name="Delaney T.P."/>
            <person name="Lazarowitz S.G."/>
            <person name="Martin G.B."/>
            <person name="Schneider D.J."/>
            <person name="Tang X."/>
            <person name="Bender C.L."/>
            <person name="White O."/>
            <person name="Fraser C.M."/>
            <person name="Collmer A."/>
        </authorList>
    </citation>
    <scope>NUCLEOTIDE SEQUENCE [LARGE SCALE GENOMIC DNA]</scope>
    <source>
        <strain>ATCC BAA-871 / DC3000</strain>
    </source>
</reference>
<feature type="chain" id="PRO_0000194339" description="Agmatine deiminase">
    <location>
        <begin position="1"/>
        <end position="368"/>
    </location>
</feature>
<feature type="active site" description="Amidino-cysteine intermediate" evidence="1">
    <location>
        <position position="357"/>
    </location>
</feature>
<accession>Q87UB2</accession>
<organism>
    <name type="scientific">Pseudomonas syringae pv. tomato (strain ATCC BAA-871 / DC3000)</name>
    <dbReference type="NCBI Taxonomy" id="223283"/>
    <lineage>
        <taxon>Bacteria</taxon>
        <taxon>Pseudomonadati</taxon>
        <taxon>Pseudomonadota</taxon>
        <taxon>Gammaproteobacteria</taxon>
        <taxon>Pseudomonadales</taxon>
        <taxon>Pseudomonadaceae</taxon>
        <taxon>Pseudomonas</taxon>
    </lineage>
</organism>
<keyword id="KW-0378">Hydrolase</keyword>
<keyword id="KW-0620">Polyamine biosynthesis</keyword>
<keyword id="KW-1185">Reference proteome</keyword>
<evidence type="ECO:0000255" key="1">
    <source>
        <dbReference type="HAMAP-Rule" id="MF_01841"/>
    </source>
</evidence>